<dbReference type="EC" id="6.3.5.3" evidence="1"/>
<dbReference type="EC" id="3.5.1.2" evidence="1"/>
<dbReference type="EMBL" id="AE000666">
    <property type="protein sequence ID" value="AAB84674.1"/>
    <property type="molecule type" value="Genomic_DNA"/>
</dbReference>
<dbReference type="PIR" id="E69091">
    <property type="entry name" value="E69091"/>
</dbReference>
<dbReference type="RefSeq" id="WP_010875807.1">
    <property type="nucleotide sequence ID" value="NC_000916.1"/>
</dbReference>
<dbReference type="SMR" id="O26270"/>
<dbReference type="FunCoup" id="O26270">
    <property type="interactions" value="19"/>
</dbReference>
<dbReference type="STRING" id="187420.MTH_168"/>
<dbReference type="MEROPS" id="C56.972"/>
<dbReference type="PaxDb" id="187420-MTH_168"/>
<dbReference type="EnsemblBacteria" id="AAB84674">
    <property type="protein sequence ID" value="AAB84674"/>
    <property type="gene ID" value="MTH_168"/>
</dbReference>
<dbReference type="GeneID" id="82296647"/>
<dbReference type="KEGG" id="mth:MTH_168"/>
<dbReference type="PATRIC" id="fig|187420.15.peg.141"/>
<dbReference type="HOGENOM" id="CLU_001031_3_1_2"/>
<dbReference type="InParanoid" id="O26270"/>
<dbReference type="UniPathway" id="UPA00074">
    <property type="reaction ID" value="UER00128"/>
</dbReference>
<dbReference type="Proteomes" id="UP000005223">
    <property type="component" value="Chromosome"/>
</dbReference>
<dbReference type="GO" id="GO:0005737">
    <property type="term" value="C:cytoplasm"/>
    <property type="evidence" value="ECO:0007669"/>
    <property type="project" value="UniProtKB-SubCell"/>
</dbReference>
<dbReference type="GO" id="GO:0005524">
    <property type="term" value="F:ATP binding"/>
    <property type="evidence" value="ECO:0007669"/>
    <property type="project" value="UniProtKB-KW"/>
</dbReference>
<dbReference type="GO" id="GO:0004359">
    <property type="term" value="F:glutaminase activity"/>
    <property type="evidence" value="ECO:0007669"/>
    <property type="project" value="UniProtKB-EC"/>
</dbReference>
<dbReference type="GO" id="GO:0004642">
    <property type="term" value="F:phosphoribosylformylglycinamidine synthase activity"/>
    <property type="evidence" value="ECO:0007669"/>
    <property type="project" value="UniProtKB-UniRule"/>
</dbReference>
<dbReference type="GO" id="GO:0006189">
    <property type="term" value="P:'de novo' IMP biosynthetic process"/>
    <property type="evidence" value="ECO:0007669"/>
    <property type="project" value="UniProtKB-UniRule"/>
</dbReference>
<dbReference type="CDD" id="cd01740">
    <property type="entry name" value="GATase1_FGAR_AT"/>
    <property type="match status" value="1"/>
</dbReference>
<dbReference type="Gene3D" id="3.40.50.880">
    <property type="match status" value="1"/>
</dbReference>
<dbReference type="HAMAP" id="MF_00421">
    <property type="entry name" value="PurQ"/>
    <property type="match status" value="1"/>
</dbReference>
<dbReference type="InterPro" id="IPR029062">
    <property type="entry name" value="Class_I_gatase-like"/>
</dbReference>
<dbReference type="InterPro" id="IPR010075">
    <property type="entry name" value="PRibForGlyAmidine_synth_PurQ"/>
</dbReference>
<dbReference type="NCBIfam" id="TIGR01737">
    <property type="entry name" value="FGAM_synth_I"/>
    <property type="match status" value="1"/>
</dbReference>
<dbReference type="NCBIfam" id="NF002957">
    <property type="entry name" value="PRK03619.1"/>
    <property type="match status" value="1"/>
</dbReference>
<dbReference type="PANTHER" id="PTHR47552">
    <property type="entry name" value="PHOSPHORIBOSYLFORMYLGLYCINAMIDINE SYNTHASE SUBUNIT PURQ"/>
    <property type="match status" value="1"/>
</dbReference>
<dbReference type="PANTHER" id="PTHR47552:SF1">
    <property type="entry name" value="PHOSPHORIBOSYLFORMYLGLYCINAMIDINE SYNTHASE SUBUNIT PURQ"/>
    <property type="match status" value="1"/>
</dbReference>
<dbReference type="Pfam" id="PF13507">
    <property type="entry name" value="GATase_5"/>
    <property type="match status" value="1"/>
</dbReference>
<dbReference type="PIRSF" id="PIRSF001586">
    <property type="entry name" value="FGAM_synth_I"/>
    <property type="match status" value="1"/>
</dbReference>
<dbReference type="SMART" id="SM01211">
    <property type="entry name" value="GATase_5"/>
    <property type="match status" value="1"/>
</dbReference>
<dbReference type="SUPFAM" id="SSF52317">
    <property type="entry name" value="Class I glutamine amidotransferase-like"/>
    <property type="match status" value="1"/>
</dbReference>
<dbReference type="PROSITE" id="PS51273">
    <property type="entry name" value="GATASE_TYPE_1"/>
    <property type="match status" value="1"/>
</dbReference>
<gene>
    <name evidence="1" type="primary">purQ</name>
    <name type="ordered locus">MTH_168</name>
</gene>
<evidence type="ECO:0000255" key="1">
    <source>
        <dbReference type="HAMAP-Rule" id="MF_00421"/>
    </source>
</evidence>
<protein>
    <recommendedName>
        <fullName evidence="1">Phosphoribosylformylglycinamidine synthase subunit PurQ</fullName>
        <shortName evidence="1">FGAM synthase</shortName>
        <ecNumber evidence="1">6.3.5.3</ecNumber>
    </recommendedName>
    <alternativeName>
        <fullName evidence="1">Formylglycinamide ribonucleotide amidotransferase subunit I</fullName>
        <shortName evidence="1">FGAR amidotransferase I</shortName>
        <shortName evidence="1">FGAR-AT I</shortName>
    </alternativeName>
    <alternativeName>
        <fullName evidence="1">Glutaminase PurQ</fullName>
        <ecNumber evidence="1">3.5.1.2</ecNumber>
    </alternativeName>
    <alternativeName>
        <fullName evidence="1">Phosphoribosylformylglycinamidine synthase subunit I</fullName>
    </alternativeName>
</protein>
<keyword id="KW-0067">ATP-binding</keyword>
<keyword id="KW-0963">Cytoplasm</keyword>
<keyword id="KW-0315">Glutamine amidotransferase</keyword>
<keyword id="KW-0378">Hydrolase</keyword>
<keyword id="KW-0436">Ligase</keyword>
<keyword id="KW-0547">Nucleotide-binding</keyword>
<keyword id="KW-0658">Purine biosynthesis</keyword>
<keyword id="KW-1185">Reference proteome</keyword>
<comment type="function">
    <text evidence="1">Part of the phosphoribosylformylglycinamidine synthase complex involved in the purines biosynthetic pathway. Catalyzes the ATP-dependent conversion of formylglycinamide ribonucleotide (FGAR) and glutamine to yield formylglycinamidine ribonucleotide (FGAM) and glutamate. The FGAM synthase complex is composed of three subunits. PurQ produces an ammonia molecule by converting glutamine to glutamate. PurL transfers the ammonia molecule to FGAR to form FGAM in an ATP-dependent manner. PurS interacts with PurQ and PurL and is thought to assist in the transfer of the ammonia molecule from PurQ to PurL.</text>
</comment>
<comment type="catalytic activity">
    <reaction evidence="1">
        <text>N(2)-formyl-N(1)-(5-phospho-beta-D-ribosyl)glycinamide + L-glutamine + ATP + H2O = 2-formamido-N(1)-(5-O-phospho-beta-D-ribosyl)acetamidine + L-glutamate + ADP + phosphate + H(+)</text>
        <dbReference type="Rhea" id="RHEA:17129"/>
        <dbReference type="ChEBI" id="CHEBI:15377"/>
        <dbReference type="ChEBI" id="CHEBI:15378"/>
        <dbReference type="ChEBI" id="CHEBI:29985"/>
        <dbReference type="ChEBI" id="CHEBI:30616"/>
        <dbReference type="ChEBI" id="CHEBI:43474"/>
        <dbReference type="ChEBI" id="CHEBI:58359"/>
        <dbReference type="ChEBI" id="CHEBI:147286"/>
        <dbReference type="ChEBI" id="CHEBI:147287"/>
        <dbReference type="ChEBI" id="CHEBI:456216"/>
        <dbReference type="EC" id="6.3.5.3"/>
    </reaction>
</comment>
<comment type="catalytic activity">
    <reaction evidence="1">
        <text>L-glutamine + H2O = L-glutamate + NH4(+)</text>
        <dbReference type="Rhea" id="RHEA:15889"/>
        <dbReference type="ChEBI" id="CHEBI:15377"/>
        <dbReference type="ChEBI" id="CHEBI:28938"/>
        <dbReference type="ChEBI" id="CHEBI:29985"/>
        <dbReference type="ChEBI" id="CHEBI:58359"/>
        <dbReference type="EC" id="3.5.1.2"/>
    </reaction>
</comment>
<comment type="pathway">
    <text evidence="1">Purine metabolism; IMP biosynthesis via de novo pathway; 5-amino-1-(5-phospho-D-ribosyl)imidazole from N(2)-formyl-N(1)-(5-phospho-D-ribosyl)glycinamide: step 1/2.</text>
</comment>
<comment type="subunit">
    <text evidence="1">Part of the FGAM synthase complex composed of 1 PurL, 1 PurQ and 2 PurS subunits.</text>
</comment>
<comment type="subcellular location">
    <subcellularLocation>
        <location evidence="1">Cytoplasm</location>
    </subcellularLocation>
</comment>
<proteinExistence type="inferred from homology"/>
<organism>
    <name type="scientific">Methanothermobacter thermautotrophicus (strain ATCC 29096 / DSM 1053 / JCM 10044 / NBRC 100330 / Delta H)</name>
    <name type="common">Methanobacterium thermoautotrophicum</name>
    <dbReference type="NCBI Taxonomy" id="187420"/>
    <lineage>
        <taxon>Archaea</taxon>
        <taxon>Methanobacteriati</taxon>
        <taxon>Methanobacteriota</taxon>
        <taxon>Methanomada group</taxon>
        <taxon>Methanobacteria</taxon>
        <taxon>Methanobacteriales</taxon>
        <taxon>Methanobacteriaceae</taxon>
        <taxon>Methanothermobacter</taxon>
    </lineage>
</organism>
<name>PURQ_METTH</name>
<sequence length="218" mass="24274">MRVGVIRFPGSNCDRDVHHVLELAGAEPEYVWWNQRNLDHLDAVVIPGGFSYGDYLRAGAIAAITPVMDAVRELVREEKPVLGICNGAQILAEVGLVPGVFTVNEHPKFNCQWTELRVKTTRTPFTGLFKKDEVIRMPVAHAEGRYYHDNISEVWENDQVVLQFHGENPNGSLDGITGVCDESGLVCAVMPHPERASEEILGSVDGFKFFRGILKFRG</sequence>
<reference key="1">
    <citation type="journal article" date="1997" name="J. Bacteriol.">
        <title>Complete genome sequence of Methanobacterium thermoautotrophicum deltaH: functional analysis and comparative genomics.</title>
        <authorList>
            <person name="Smith D.R."/>
            <person name="Doucette-Stamm L.A."/>
            <person name="Deloughery C."/>
            <person name="Lee H.-M."/>
            <person name="Dubois J."/>
            <person name="Aldredge T."/>
            <person name="Bashirzadeh R."/>
            <person name="Blakely D."/>
            <person name="Cook R."/>
            <person name="Gilbert K."/>
            <person name="Harrison D."/>
            <person name="Hoang L."/>
            <person name="Keagle P."/>
            <person name="Lumm W."/>
            <person name="Pothier B."/>
            <person name="Qiu D."/>
            <person name="Spadafora R."/>
            <person name="Vicare R."/>
            <person name="Wang Y."/>
            <person name="Wierzbowski J."/>
            <person name="Gibson R."/>
            <person name="Jiwani N."/>
            <person name="Caruso A."/>
            <person name="Bush D."/>
            <person name="Safer H."/>
            <person name="Patwell D."/>
            <person name="Prabhakar S."/>
            <person name="McDougall S."/>
            <person name="Shimer G."/>
            <person name="Goyal A."/>
            <person name="Pietrovski S."/>
            <person name="Church G.M."/>
            <person name="Daniels C.J."/>
            <person name="Mao J.-I."/>
            <person name="Rice P."/>
            <person name="Noelling J."/>
            <person name="Reeve J.N."/>
        </authorList>
    </citation>
    <scope>NUCLEOTIDE SEQUENCE [LARGE SCALE GENOMIC DNA]</scope>
    <source>
        <strain>ATCC 29096 / DSM 1053 / JCM 10044 / NBRC 100330 / Delta H</strain>
    </source>
</reference>
<accession>O26270</accession>
<feature type="chain" id="PRO_0000100612" description="Phosphoribosylformylglycinamidine synthase subunit PurQ">
    <location>
        <begin position="1"/>
        <end position="218"/>
    </location>
</feature>
<feature type="domain" description="Glutamine amidotransferase type-1" evidence="1">
    <location>
        <begin position="2"/>
        <end position="218"/>
    </location>
</feature>
<feature type="active site" description="Nucleophile" evidence="1">
    <location>
        <position position="85"/>
    </location>
</feature>
<feature type="active site" evidence="1">
    <location>
        <position position="192"/>
    </location>
</feature>
<feature type="active site" evidence="1">
    <location>
        <position position="194"/>
    </location>
</feature>